<proteinExistence type="inferred from homology"/>
<organism>
    <name type="scientific">Sphingopyxis alaskensis (strain DSM 13593 / LMG 18877 / RB2256)</name>
    <name type="common">Sphingomonas alaskensis</name>
    <dbReference type="NCBI Taxonomy" id="317655"/>
    <lineage>
        <taxon>Bacteria</taxon>
        <taxon>Pseudomonadati</taxon>
        <taxon>Pseudomonadota</taxon>
        <taxon>Alphaproteobacteria</taxon>
        <taxon>Sphingomonadales</taxon>
        <taxon>Sphingomonadaceae</taxon>
        <taxon>Sphingopyxis</taxon>
    </lineage>
</organism>
<gene>
    <name evidence="1" type="primary">rpsN</name>
    <name type="ordered locus">Sala_2805</name>
</gene>
<keyword id="KW-1185">Reference proteome</keyword>
<keyword id="KW-0687">Ribonucleoprotein</keyword>
<keyword id="KW-0689">Ribosomal protein</keyword>
<keyword id="KW-0694">RNA-binding</keyword>
<keyword id="KW-0699">rRNA-binding</keyword>
<protein>
    <recommendedName>
        <fullName evidence="1">Small ribosomal subunit protein uS14</fullName>
    </recommendedName>
    <alternativeName>
        <fullName evidence="2">30S ribosomal protein S14</fullName>
    </alternativeName>
</protein>
<dbReference type="EMBL" id="CP000356">
    <property type="protein sequence ID" value="ABF54510.1"/>
    <property type="molecule type" value="Genomic_DNA"/>
</dbReference>
<dbReference type="RefSeq" id="WP_011543075.1">
    <property type="nucleotide sequence ID" value="NC_008048.1"/>
</dbReference>
<dbReference type="SMR" id="Q1GPB2"/>
<dbReference type="STRING" id="317655.Sala_2805"/>
<dbReference type="KEGG" id="sal:Sala_2805"/>
<dbReference type="eggNOG" id="COG0199">
    <property type="taxonomic scope" value="Bacteria"/>
</dbReference>
<dbReference type="HOGENOM" id="CLU_139869_0_1_5"/>
<dbReference type="OrthoDB" id="9810484at2"/>
<dbReference type="Proteomes" id="UP000006578">
    <property type="component" value="Chromosome"/>
</dbReference>
<dbReference type="GO" id="GO:0005737">
    <property type="term" value="C:cytoplasm"/>
    <property type="evidence" value="ECO:0007669"/>
    <property type="project" value="UniProtKB-ARBA"/>
</dbReference>
<dbReference type="GO" id="GO:0015935">
    <property type="term" value="C:small ribosomal subunit"/>
    <property type="evidence" value="ECO:0007669"/>
    <property type="project" value="TreeGrafter"/>
</dbReference>
<dbReference type="GO" id="GO:0019843">
    <property type="term" value="F:rRNA binding"/>
    <property type="evidence" value="ECO:0007669"/>
    <property type="project" value="UniProtKB-UniRule"/>
</dbReference>
<dbReference type="GO" id="GO:0003735">
    <property type="term" value="F:structural constituent of ribosome"/>
    <property type="evidence" value="ECO:0007669"/>
    <property type="project" value="InterPro"/>
</dbReference>
<dbReference type="GO" id="GO:0006412">
    <property type="term" value="P:translation"/>
    <property type="evidence" value="ECO:0007669"/>
    <property type="project" value="UniProtKB-UniRule"/>
</dbReference>
<dbReference type="FunFam" id="1.10.287.1480:FF:000001">
    <property type="entry name" value="30S ribosomal protein S14"/>
    <property type="match status" value="1"/>
</dbReference>
<dbReference type="Gene3D" id="1.10.287.1480">
    <property type="match status" value="1"/>
</dbReference>
<dbReference type="HAMAP" id="MF_00537">
    <property type="entry name" value="Ribosomal_uS14_1"/>
    <property type="match status" value="1"/>
</dbReference>
<dbReference type="InterPro" id="IPR001209">
    <property type="entry name" value="Ribosomal_uS14"/>
</dbReference>
<dbReference type="InterPro" id="IPR023036">
    <property type="entry name" value="Ribosomal_uS14_bac/plastid"/>
</dbReference>
<dbReference type="InterPro" id="IPR018271">
    <property type="entry name" value="Ribosomal_uS14_CS"/>
</dbReference>
<dbReference type="NCBIfam" id="NF006477">
    <property type="entry name" value="PRK08881.1"/>
    <property type="match status" value="1"/>
</dbReference>
<dbReference type="PANTHER" id="PTHR19836">
    <property type="entry name" value="30S RIBOSOMAL PROTEIN S14"/>
    <property type="match status" value="1"/>
</dbReference>
<dbReference type="PANTHER" id="PTHR19836:SF19">
    <property type="entry name" value="SMALL RIBOSOMAL SUBUNIT PROTEIN US14M"/>
    <property type="match status" value="1"/>
</dbReference>
<dbReference type="Pfam" id="PF00253">
    <property type="entry name" value="Ribosomal_S14"/>
    <property type="match status" value="1"/>
</dbReference>
<dbReference type="SUPFAM" id="SSF57716">
    <property type="entry name" value="Glucocorticoid receptor-like (DNA-binding domain)"/>
    <property type="match status" value="1"/>
</dbReference>
<dbReference type="PROSITE" id="PS00527">
    <property type="entry name" value="RIBOSOMAL_S14"/>
    <property type="match status" value="1"/>
</dbReference>
<comment type="function">
    <text evidence="1">Binds 16S rRNA, required for the assembly of 30S particles and may also be responsible for determining the conformation of the 16S rRNA at the A site.</text>
</comment>
<comment type="subunit">
    <text evidence="1">Part of the 30S ribosomal subunit. Contacts proteins S3 and S10.</text>
</comment>
<comment type="similarity">
    <text evidence="1">Belongs to the universal ribosomal protein uS14 family.</text>
</comment>
<name>RS14_SPHAL</name>
<reference key="1">
    <citation type="journal article" date="2009" name="Proc. Natl. Acad. Sci. U.S.A.">
        <title>The genomic basis of trophic strategy in marine bacteria.</title>
        <authorList>
            <person name="Lauro F.M."/>
            <person name="McDougald D."/>
            <person name="Thomas T."/>
            <person name="Williams T.J."/>
            <person name="Egan S."/>
            <person name="Rice S."/>
            <person name="DeMaere M.Z."/>
            <person name="Ting L."/>
            <person name="Ertan H."/>
            <person name="Johnson J."/>
            <person name="Ferriera S."/>
            <person name="Lapidus A."/>
            <person name="Anderson I."/>
            <person name="Kyrpides N."/>
            <person name="Munk A.C."/>
            <person name="Detter C."/>
            <person name="Han C.S."/>
            <person name="Brown M.V."/>
            <person name="Robb F.T."/>
            <person name="Kjelleberg S."/>
            <person name="Cavicchioli R."/>
        </authorList>
    </citation>
    <scope>NUCLEOTIDE SEQUENCE [LARGE SCALE GENOMIC DNA]</scope>
    <source>
        <strain>DSM 13593 / LMG 18877 / RB2256</strain>
    </source>
</reference>
<feature type="chain" id="PRO_1000128596" description="Small ribosomal subunit protein uS14">
    <location>
        <begin position="1"/>
        <end position="101"/>
    </location>
</feature>
<accession>Q1GPB2</accession>
<evidence type="ECO:0000255" key="1">
    <source>
        <dbReference type="HAMAP-Rule" id="MF_00537"/>
    </source>
</evidence>
<evidence type="ECO:0000305" key="2"/>
<sequence length="101" mass="11616">MAKLSSVNKNERRKKLVKKYAGRYAKLKAIAADSSLDDGERLIARLKMAEIPRNGNPTRIRNRCELTGRPRAYYRKFRLCRVQLRDLANKGLIPGVVKSSW</sequence>